<organism>
    <name type="scientific">Rhodopirellula baltica (strain DSM 10527 / NCIMB 13988 / SH1)</name>
    <dbReference type="NCBI Taxonomy" id="243090"/>
    <lineage>
        <taxon>Bacteria</taxon>
        <taxon>Pseudomonadati</taxon>
        <taxon>Planctomycetota</taxon>
        <taxon>Planctomycetia</taxon>
        <taxon>Pirellulales</taxon>
        <taxon>Pirellulaceae</taxon>
        <taxon>Rhodopirellula</taxon>
    </lineage>
</organism>
<keyword id="KW-0067">ATP-binding</keyword>
<keyword id="KW-0963">Cytoplasm</keyword>
<keyword id="KW-0418">Kinase</keyword>
<keyword id="KW-0520">NAD</keyword>
<keyword id="KW-0521">NADP</keyword>
<keyword id="KW-0547">Nucleotide-binding</keyword>
<keyword id="KW-1185">Reference proteome</keyword>
<keyword id="KW-0808">Transferase</keyword>
<dbReference type="EC" id="2.7.1.23" evidence="1"/>
<dbReference type="EMBL" id="BX294136">
    <property type="protein sequence ID" value="CAD72448.1"/>
    <property type="molecule type" value="Genomic_DNA"/>
</dbReference>
<dbReference type="RefSeq" id="NP_864763.1">
    <property type="nucleotide sequence ID" value="NC_005027.1"/>
</dbReference>
<dbReference type="SMR" id="Q7UWB8"/>
<dbReference type="FunCoup" id="Q7UWB8">
    <property type="interactions" value="522"/>
</dbReference>
<dbReference type="STRING" id="243090.RB2142"/>
<dbReference type="EnsemblBacteria" id="CAD72448">
    <property type="protein sequence ID" value="CAD72448"/>
    <property type="gene ID" value="RB2142"/>
</dbReference>
<dbReference type="KEGG" id="rba:RB2142"/>
<dbReference type="PATRIC" id="fig|243090.15.peg.978"/>
<dbReference type="eggNOG" id="COG0061">
    <property type="taxonomic scope" value="Bacteria"/>
</dbReference>
<dbReference type="HOGENOM" id="CLU_008831_0_3_0"/>
<dbReference type="InParanoid" id="Q7UWB8"/>
<dbReference type="OrthoDB" id="9774737at2"/>
<dbReference type="Proteomes" id="UP000001025">
    <property type="component" value="Chromosome"/>
</dbReference>
<dbReference type="GO" id="GO:0005737">
    <property type="term" value="C:cytoplasm"/>
    <property type="evidence" value="ECO:0007669"/>
    <property type="project" value="UniProtKB-SubCell"/>
</dbReference>
<dbReference type="GO" id="GO:0005524">
    <property type="term" value="F:ATP binding"/>
    <property type="evidence" value="ECO:0007669"/>
    <property type="project" value="UniProtKB-KW"/>
</dbReference>
<dbReference type="GO" id="GO:0046872">
    <property type="term" value="F:metal ion binding"/>
    <property type="evidence" value="ECO:0007669"/>
    <property type="project" value="UniProtKB-UniRule"/>
</dbReference>
<dbReference type="GO" id="GO:0051287">
    <property type="term" value="F:NAD binding"/>
    <property type="evidence" value="ECO:0007669"/>
    <property type="project" value="UniProtKB-ARBA"/>
</dbReference>
<dbReference type="GO" id="GO:0003951">
    <property type="term" value="F:NAD+ kinase activity"/>
    <property type="evidence" value="ECO:0000318"/>
    <property type="project" value="GO_Central"/>
</dbReference>
<dbReference type="GO" id="GO:0019674">
    <property type="term" value="P:NAD metabolic process"/>
    <property type="evidence" value="ECO:0007669"/>
    <property type="project" value="InterPro"/>
</dbReference>
<dbReference type="GO" id="GO:0006741">
    <property type="term" value="P:NADP biosynthetic process"/>
    <property type="evidence" value="ECO:0000318"/>
    <property type="project" value="GO_Central"/>
</dbReference>
<dbReference type="Gene3D" id="3.40.50.10330">
    <property type="entry name" value="Probable inorganic polyphosphate/atp-NAD kinase, domain 1"/>
    <property type="match status" value="1"/>
</dbReference>
<dbReference type="Gene3D" id="2.60.200.30">
    <property type="entry name" value="Probable inorganic polyphosphate/atp-NAD kinase, domain 2"/>
    <property type="match status" value="1"/>
</dbReference>
<dbReference type="HAMAP" id="MF_00361">
    <property type="entry name" value="NAD_kinase"/>
    <property type="match status" value="1"/>
</dbReference>
<dbReference type="InterPro" id="IPR017438">
    <property type="entry name" value="ATP-NAD_kinase_N"/>
</dbReference>
<dbReference type="InterPro" id="IPR017437">
    <property type="entry name" value="ATP-NAD_kinase_PpnK-typ_C"/>
</dbReference>
<dbReference type="InterPro" id="IPR016064">
    <property type="entry name" value="NAD/diacylglycerol_kinase_sf"/>
</dbReference>
<dbReference type="InterPro" id="IPR002504">
    <property type="entry name" value="NADK"/>
</dbReference>
<dbReference type="PANTHER" id="PTHR20275">
    <property type="entry name" value="NAD KINASE"/>
    <property type="match status" value="1"/>
</dbReference>
<dbReference type="PANTHER" id="PTHR20275:SF0">
    <property type="entry name" value="NAD KINASE"/>
    <property type="match status" value="1"/>
</dbReference>
<dbReference type="Pfam" id="PF01513">
    <property type="entry name" value="NAD_kinase"/>
    <property type="match status" value="1"/>
</dbReference>
<dbReference type="Pfam" id="PF20143">
    <property type="entry name" value="NAD_kinase_C"/>
    <property type="match status" value="1"/>
</dbReference>
<dbReference type="SUPFAM" id="SSF111331">
    <property type="entry name" value="NAD kinase/diacylglycerol kinase-like"/>
    <property type="match status" value="1"/>
</dbReference>
<protein>
    <recommendedName>
        <fullName evidence="1">NAD kinase</fullName>
        <ecNumber evidence="1">2.7.1.23</ecNumber>
    </recommendedName>
    <alternativeName>
        <fullName evidence="1">ATP-dependent NAD kinase</fullName>
    </alternativeName>
</protein>
<comment type="function">
    <text evidence="1">Involved in the regulation of the intracellular balance of NAD and NADP, and is a key enzyme in the biosynthesis of NADP. Catalyzes specifically the phosphorylation on 2'-hydroxyl of the adenosine moiety of NAD to yield NADP.</text>
</comment>
<comment type="catalytic activity">
    <reaction evidence="1">
        <text>NAD(+) + ATP = ADP + NADP(+) + H(+)</text>
        <dbReference type="Rhea" id="RHEA:18629"/>
        <dbReference type="ChEBI" id="CHEBI:15378"/>
        <dbReference type="ChEBI" id="CHEBI:30616"/>
        <dbReference type="ChEBI" id="CHEBI:57540"/>
        <dbReference type="ChEBI" id="CHEBI:58349"/>
        <dbReference type="ChEBI" id="CHEBI:456216"/>
        <dbReference type="EC" id="2.7.1.23"/>
    </reaction>
</comment>
<comment type="cofactor">
    <cofactor evidence="1">
        <name>a divalent metal cation</name>
        <dbReference type="ChEBI" id="CHEBI:60240"/>
    </cofactor>
</comment>
<comment type="subcellular location">
    <subcellularLocation>
        <location evidence="1">Cytoplasm</location>
    </subcellularLocation>
</comment>
<comment type="similarity">
    <text evidence="1">Belongs to the NAD kinase family.</text>
</comment>
<name>NADK_RHOBA</name>
<proteinExistence type="inferred from homology"/>
<gene>
    <name evidence="1" type="primary">nadK</name>
    <name type="ordered locus">RB2142</name>
</gene>
<sequence length="311" mass="34205">MSRSRFRGRITGWYLMASSSGEKLDWCGCGRPPRIVVLGAPDKLNVSSAWKRLRPTIQSHAELIAADFEFTYDFSDKEVDLVIVIGGDGSILQSARQMGENQTPVLGINCGRLGFLAALSPEDFLDAWPKVCQGDFSIIRHLMLEVQLIRDDEVIAQSMALNEAAILNGPPFAILDIDLYADGELATQYRCDGLIVATPVGSTAHNLSAGGPILRRQLQAIVISPISPHTLTYRPLVDSADTRLELAVTEPNESTSIVVDGRILGQLKSGDRVRVHRAPVSFEMLRVPGQNDYRTLREKLGWSGRLALRQL</sequence>
<feature type="chain" id="PRO_0000226303" description="NAD kinase">
    <location>
        <begin position="1"/>
        <end position="311"/>
    </location>
</feature>
<feature type="active site" description="Proton acceptor" evidence="1">
    <location>
        <position position="88"/>
    </location>
</feature>
<feature type="binding site" evidence="1">
    <location>
        <begin position="88"/>
        <end position="89"/>
    </location>
    <ligand>
        <name>NAD(+)</name>
        <dbReference type="ChEBI" id="CHEBI:57540"/>
    </ligand>
</feature>
<feature type="binding site" evidence="1">
    <location>
        <begin position="162"/>
        <end position="163"/>
    </location>
    <ligand>
        <name>NAD(+)</name>
        <dbReference type="ChEBI" id="CHEBI:57540"/>
    </ligand>
</feature>
<feature type="binding site" evidence="1">
    <location>
        <position position="190"/>
    </location>
    <ligand>
        <name>NAD(+)</name>
        <dbReference type="ChEBI" id="CHEBI:57540"/>
    </ligand>
</feature>
<feature type="binding site" evidence="1">
    <location>
        <position position="192"/>
    </location>
    <ligand>
        <name>NAD(+)</name>
        <dbReference type="ChEBI" id="CHEBI:57540"/>
    </ligand>
</feature>
<feature type="binding site" evidence="1">
    <location>
        <position position="200"/>
    </location>
    <ligand>
        <name>NAD(+)</name>
        <dbReference type="ChEBI" id="CHEBI:57540"/>
    </ligand>
</feature>
<feature type="binding site" evidence="1">
    <location>
        <begin position="203"/>
        <end position="208"/>
    </location>
    <ligand>
        <name>NAD(+)</name>
        <dbReference type="ChEBI" id="CHEBI:57540"/>
    </ligand>
</feature>
<evidence type="ECO:0000255" key="1">
    <source>
        <dbReference type="HAMAP-Rule" id="MF_00361"/>
    </source>
</evidence>
<accession>Q7UWB8</accession>
<reference key="1">
    <citation type="journal article" date="2003" name="Proc. Natl. Acad. Sci. U.S.A.">
        <title>Complete genome sequence of the marine planctomycete Pirellula sp. strain 1.</title>
        <authorList>
            <person name="Gloeckner F.O."/>
            <person name="Kube M."/>
            <person name="Bauer M."/>
            <person name="Teeling H."/>
            <person name="Lombardot T."/>
            <person name="Ludwig W."/>
            <person name="Gade D."/>
            <person name="Beck A."/>
            <person name="Borzym K."/>
            <person name="Heitmann K."/>
            <person name="Rabus R."/>
            <person name="Schlesner H."/>
            <person name="Amann R."/>
            <person name="Reinhardt R."/>
        </authorList>
    </citation>
    <scope>NUCLEOTIDE SEQUENCE [LARGE SCALE GENOMIC DNA]</scope>
    <source>
        <strain>DSM 10527 / NCIMB 13988 / SH1</strain>
    </source>
</reference>